<organism>
    <name type="scientific">Cryptococcus neoformans var. grubii serotype A (strain H99 / ATCC 208821 / CBS 10515 / FGSC 9487)</name>
    <name type="common">Filobasidiella neoformans var. grubii</name>
    <dbReference type="NCBI Taxonomy" id="235443"/>
    <lineage>
        <taxon>Eukaryota</taxon>
        <taxon>Fungi</taxon>
        <taxon>Dikarya</taxon>
        <taxon>Basidiomycota</taxon>
        <taxon>Agaricomycotina</taxon>
        <taxon>Tremellomycetes</taxon>
        <taxon>Tremellales</taxon>
        <taxon>Cryptococcaceae</taxon>
        <taxon>Cryptococcus</taxon>
        <taxon>Cryptococcus neoformans species complex</taxon>
    </lineage>
</organism>
<keyword id="KW-1003">Cell membrane</keyword>
<keyword id="KW-0325">Glycoprotein</keyword>
<keyword id="KW-0406">Ion transport</keyword>
<keyword id="KW-0472">Membrane</keyword>
<keyword id="KW-0533">Nickel</keyword>
<keyword id="KW-0921">Nickel transport</keyword>
<keyword id="KW-0812">Transmembrane</keyword>
<keyword id="KW-1133">Transmembrane helix</keyword>
<keyword id="KW-0813">Transport</keyword>
<keyword id="KW-0843">Virulence</keyword>
<sequence>MLSRWTRRVNESRLAQRKLTLLGRAIALVVGELLFNAVCWIAAGICFGKTDGILGLALLAWTIGLRHGLDADHISAIDNATRQLVSQGQLPITCGLFFSLGHSTIVIVVNVAIAVSVDIYDKLDRVGSIGGIVGAAVSASFLFLIACLNIYFLVGAIKQRRSMKRRQALGLPPDEDEGDPSKIYGGGCMVRVVGPILRAVDRPWKMYPVGVLFGFGFDTASSIALLAISAIAQRGPNGDAISHGKIVILPFLFTAGMSLVDSLDSILMLYAYATPDSTSPEGKLALLQYPDPNYKDSYLEETVATTLPAEDGQTERHVIEPIDIPQGETEGLETEDNIKAKTGNEILVEEERVGGPSRVDGSGGVGNERVMKAKANTMSSLSIILTLLSILVALSISLIEIMGLIGDNCTQCQDAANDPDGGGLAGSWWRAWARANDQSGYIGAAIVGCFAAILAGWYGAKWGKKKWKARRDANAAIVLEDNEDDAAETPVA</sequence>
<gene>
    <name evidence="4" type="primary">NIC1</name>
    <name type="ORF">CNAG_03664</name>
</gene>
<reference key="1">
    <citation type="journal article" date="2014" name="PLoS Genet.">
        <title>Analysis of the genome and transcriptome of Cryptococcus neoformans var. grubii reveals complex RNA expression and microevolution leading to virulence attenuation.</title>
        <authorList>
            <person name="Janbon G."/>
            <person name="Ormerod K.L."/>
            <person name="Paulet D."/>
            <person name="Byrnes E.J. III"/>
            <person name="Yadav V."/>
            <person name="Chatterjee G."/>
            <person name="Mullapudi N."/>
            <person name="Hon C.-C."/>
            <person name="Billmyre R.B."/>
            <person name="Brunel F."/>
            <person name="Bahn Y.-S."/>
            <person name="Chen W."/>
            <person name="Chen Y."/>
            <person name="Chow E.W.L."/>
            <person name="Coppee J.-Y."/>
            <person name="Floyd-Averette A."/>
            <person name="Gaillardin C."/>
            <person name="Gerik K.J."/>
            <person name="Goldberg J."/>
            <person name="Gonzalez-Hilarion S."/>
            <person name="Gujja S."/>
            <person name="Hamlin J.L."/>
            <person name="Hsueh Y.-P."/>
            <person name="Ianiri G."/>
            <person name="Jones S."/>
            <person name="Kodira C.D."/>
            <person name="Kozubowski L."/>
            <person name="Lam W."/>
            <person name="Marra M."/>
            <person name="Mesner L.D."/>
            <person name="Mieczkowski P.A."/>
            <person name="Moyrand F."/>
            <person name="Nielsen K."/>
            <person name="Proux C."/>
            <person name="Rossignol T."/>
            <person name="Schein J.E."/>
            <person name="Sun S."/>
            <person name="Wollschlaeger C."/>
            <person name="Wood I.A."/>
            <person name="Zeng Q."/>
            <person name="Neuveglise C."/>
            <person name="Newlon C.S."/>
            <person name="Perfect J.R."/>
            <person name="Lodge J.K."/>
            <person name="Idnurm A."/>
            <person name="Stajich J.E."/>
            <person name="Kronstad J.W."/>
            <person name="Sanyal K."/>
            <person name="Heitman J."/>
            <person name="Fraser J.A."/>
            <person name="Cuomo C.A."/>
            <person name="Dietrich F.S."/>
        </authorList>
    </citation>
    <scope>NUCLEOTIDE SEQUENCE [LARGE SCALE GENOMIC DNA]</scope>
    <source>
        <strain>H99 / ATCC 208821 / CBS 10515 / FGSC 9487</strain>
    </source>
</reference>
<reference key="2">
    <citation type="journal article" date="2013" name="MBio">
        <title>Factors required for activation of urease as a virulence determinant in Cryptococcus neoformans.</title>
        <authorList>
            <person name="Singh A."/>
            <person name="Panting R.J."/>
            <person name="Varma A."/>
            <person name="Saijo T."/>
            <person name="Waldron K.J."/>
            <person name="Jong A."/>
            <person name="Ngamskulrungroj P."/>
            <person name="Chang Y.C."/>
            <person name="Rutherford J.C."/>
            <person name="Kwon-Chung K.J."/>
        </authorList>
    </citation>
    <scope>FUNCTION</scope>
    <scope>DISRUPTION PHENOTYPE</scope>
    <scope>SUBSTRATE SPECIFICITY</scope>
</reference>
<proteinExistence type="inferred from homology"/>
<feature type="chain" id="PRO_0000460748" description="High-affinity nickel transport protein">
    <location>
        <begin position="1"/>
        <end position="492"/>
    </location>
</feature>
<feature type="topological domain" description="Cytoplasmic" evidence="5">
    <location>
        <begin position="1"/>
        <end position="24"/>
    </location>
</feature>
<feature type="transmembrane region" description="Helical" evidence="1">
    <location>
        <begin position="25"/>
        <end position="45"/>
    </location>
</feature>
<feature type="topological domain" description="Extracellular" evidence="5">
    <location>
        <begin position="46"/>
        <end position="50"/>
    </location>
</feature>
<feature type="transmembrane region" description="Helical" evidence="1">
    <location>
        <begin position="51"/>
        <end position="71"/>
    </location>
</feature>
<feature type="topological domain" description="Cytoplasmic" evidence="5">
    <location>
        <begin position="72"/>
        <end position="94"/>
    </location>
</feature>
<feature type="transmembrane region" description="Helical" evidence="1">
    <location>
        <begin position="95"/>
        <end position="115"/>
    </location>
</feature>
<feature type="topological domain" description="Extracellular" evidence="5">
    <location>
        <begin position="116"/>
        <end position="136"/>
    </location>
</feature>
<feature type="transmembrane region" description="Helical" evidence="1">
    <location>
        <begin position="137"/>
        <end position="157"/>
    </location>
</feature>
<feature type="topological domain" description="Cytoplasmic" evidence="5">
    <location>
        <begin position="158"/>
        <end position="210"/>
    </location>
</feature>
<feature type="transmembrane region" description="Helical" evidence="1">
    <location>
        <begin position="211"/>
        <end position="231"/>
    </location>
</feature>
<feature type="topological domain" description="Extracellular" evidence="5">
    <location>
        <begin position="232"/>
        <end position="239"/>
    </location>
</feature>
<feature type="transmembrane region" description="Helical" evidence="1">
    <location>
        <begin position="240"/>
        <end position="260"/>
    </location>
</feature>
<feature type="topological domain" description="Cytoplasmic" evidence="5">
    <location>
        <begin position="261"/>
        <end position="382"/>
    </location>
</feature>
<feature type="transmembrane region" description="Helical" evidence="1">
    <location>
        <begin position="383"/>
        <end position="403"/>
    </location>
</feature>
<feature type="topological domain" description="Extracellular" evidence="5">
    <location>
        <begin position="404"/>
        <end position="439"/>
    </location>
</feature>
<feature type="transmembrane region" description="Helical" evidence="1">
    <location>
        <begin position="440"/>
        <end position="460"/>
    </location>
</feature>
<feature type="topological domain" description="Cytoplasmic" evidence="5">
    <location>
        <begin position="461"/>
        <end position="492"/>
    </location>
</feature>
<feature type="glycosylation site" description="N-linked (GlcNAc...) asparagine" evidence="2">
    <location>
        <position position="408"/>
    </location>
</feature>
<accession>J9VKM7</accession>
<name>NIC1_CRYNH</name>
<comment type="function">
    <text evidence="3">High-affinity nickel-specific transporter responsible for nickel uptake and required for high levels of activity of urease URE1 (PubMed:23653445). Does not transport cobalt (PubMed:23653445). Plays a role in host brain invasion (PubMed:23653445).</text>
</comment>
<comment type="subcellular location">
    <subcellularLocation>
        <location evidence="5">Cell membrane</location>
        <topology evidence="1">Multi-pass membrane protein</topology>
    </subcellularLocation>
</comment>
<comment type="disruption phenotype">
    <text evidence="3">Impairs urease activity unless the growth medium was supplemented with 10 uM nickel (PubMed:23653445). Reduces the efficacy of brain invasion in mice (PubMed:23653445).</text>
</comment>
<comment type="similarity">
    <text evidence="5">Belongs to the NiCoT transporter (TC 2.A.52) family.</text>
</comment>
<dbReference type="EMBL" id="CP003821">
    <property type="protein sequence ID" value="AFR93169.1"/>
    <property type="molecule type" value="Genomic_DNA"/>
</dbReference>
<dbReference type="RefSeq" id="XP_012047373.1">
    <property type="nucleotide sequence ID" value="XM_012191983.1"/>
</dbReference>
<dbReference type="SwissPalm" id="J9VKM7"/>
<dbReference type="GeneID" id="23887140"/>
<dbReference type="KEGG" id="cng:CNAG_03664"/>
<dbReference type="VEuPathDB" id="FungiDB:CNAG_03664"/>
<dbReference type="HOGENOM" id="CLU_036094_1_0_1"/>
<dbReference type="OrthoDB" id="7054at5206"/>
<dbReference type="Proteomes" id="UP000010091">
    <property type="component" value="Chromosome 2"/>
</dbReference>
<dbReference type="GO" id="GO:0005886">
    <property type="term" value="C:plasma membrane"/>
    <property type="evidence" value="ECO:0007669"/>
    <property type="project" value="UniProtKB-SubCell"/>
</dbReference>
<dbReference type="GO" id="GO:0015099">
    <property type="term" value="F:nickel cation transmembrane transporter activity"/>
    <property type="evidence" value="ECO:0007669"/>
    <property type="project" value="InterPro"/>
</dbReference>
<dbReference type="InterPro" id="IPR004688">
    <property type="entry name" value="Ni/Co_transpt"/>
</dbReference>
<dbReference type="InterPro" id="IPR011541">
    <property type="entry name" value="Ni/Co_transpt_high_affinity"/>
</dbReference>
<dbReference type="PANTHER" id="PTHR31611">
    <property type="entry name" value="HIGH-AFFINITY NICKEL TRANSPORT PROTEIN NIC1"/>
    <property type="match status" value="1"/>
</dbReference>
<dbReference type="PANTHER" id="PTHR31611:SF0">
    <property type="entry name" value="HIGH-AFFINITY NICKEL TRANSPORT PROTEIN NIC1"/>
    <property type="match status" value="1"/>
</dbReference>
<dbReference type="Pfam" id="PF03824">
    <property type="entry name" value="NicO"/>
    <property type="match status" value="1"/>
</dbReference>
<evidence type="ECO:0000255" key="1"/>
<evidence type="ECO:0000255" key="2">
    <source>
        <dbReference type="PROSITE-ProRule" id="PRU00498"/>
    </source>
</evidence>
<evidence type="ECO:0000269" key="3">
    <source>
    </source>
</evidence>
<evidence type="ECO:0000303" key="4">
    <source>
    </source>
</evidence>
<evidence type="ECO:0000305" key="5"/>
<protein>
    <recommendedName>
        <fullName evidence="4">High-affinity nickel transport protein</fullName>
    </recommendedName>
</protein>